<evidence type="ECO:0000250" key="1">
    <source>
        <dbReference type="UniProtKB" id="Q924Z6"/>
    </source>
</evidence>
<evidence type="ECO:0000255" key="2">
    <source>
        <dbReference type="PROSITE-ProRule" id="PRU00115"/>
    </source>
</evidence>
<evidence type="ECO:0000269" key="3">
    <source>
    </source>
</evidence>
<evidence type="ECO:0000303" key="4">
    <source>
    </source>
</evidence>
<evidence type="ECO:0000305" key="5"/>
<evidence type="ECO:0007744" key="6">
    <source>
    </source>
</evidence>
<evidence type="ECO:0007744" key="7">
    <source>
    </source>
</evidence>
<evidence type="ECO:0007744" key="8">
    <source>
    </source>
</evidence>
<evidence type="ECO:0007744" key="9">
    <source>
    </source>
</evidence>
<evidence type="ECO:0007744" key="10">
    <source>
    </source>
</evidence>
<reference key="1">
    <citation type="journal article" date="2003" name="EMBO J.">
        <title>Exportin 6: a novel nuclear export receptor that is specific for profilin.actin complexes.</title>
        <authorList>
            <person name="Stueven T."/>
            <person name="Hartmann E."/>
            <person name="Goerlich D."/>
        </authorList>
    </citation>
    <scope>NUCLEOTIDE SEQUENCE [MRNA] (ISOFORM 1)</scope>
    <scope>FUNCTION IN ACTIN AND PROFILIN-ACTIN COMPLEXES EXPORT</scope>
    <scope>IDENTIFICATION IN A COMPLEX WITH RAN; ACTB AND PFN1</scope>
    <scope>INTERACTION WITH ACTB</scope>
    <source>
        <tissue>Cervix carcinoma</tissue>
    </source>
</reference>
<reference key="2">
    <citation type="journal article" date="1997" name="DNA Res.">
        <title>Prediction of the coding sequences of unidentified human genes. VII. The complete sequences of 100 new cDNA clones from brain which can code for large proteins in vitro.</title>
        <authorList>
            <person name="Nagase T."/>
            <person name="Ishikawa K."/>
            <person name="Nakajima D."/>
            <person name="Ohira M."/>
            <person name="Seki N."/>
            <person name="Miyajima N."/>
            <person name="Tanaka A."/>
            <person name="Kotani H."/>
            <person name="Nomura N."/>
            <person name="Ohara O."/>
        </authorList>
    </citation>
    <scope>NUCLEOTIDE SEQUENCE [LARGE SCALE MRNA] (ISOFORM 1)</scope>
    <source>
        <tissue>Brain</tissue>
    </source>
</reference>
<reference key="3">
    <citation type="journal article" date="2002" name="DNA Res.">
        <title>Construction of expression-ready cDNA clones for KIAA genes: manual curation of 330 KIAA cDNA clones.</title>
        <authorList>
            <person name="Nakajima D."/>
            <person name="Okazaki N."/>
            <person name="Yamakawa H."/>
            <person name="Kikuno R."/>
            <person name="Ohara O."/>
            <person name="Nagase T."/>
        </authorList>
    </citation>
    <scope>SEQUENCE REVISION</scope>
</reference>
<reference key="4">
    <citation type="journal article" date="2004" name="Nat. Genet.">
        <title>Complete sequencing and characterization of 21,243 full-length human cDNAs.</title>
        <authorList>
            <person name="Ota T."/>
            <person name="Suzuki Y."/>
            <person name="Nishikawa T."/>
            <person name="Otsuki T."/>
            <person name="Sugiyama T."/>
            <person name="Irie R."/>
            <person name="Wakamatsu A."/>
            <person name="Hayashi K."/>
            <person name="Sato H."/>
            <person name="Nagai K."/>
            <person name="Kimura K."/>
            <person name="Makita H."/>
            <person name="Sekine M."/>
            <person name="Obayashi M."/>
            <person name="Nishi T."/>
            <person name="Shibahara T."/>
            <person name="Tanaka T."/>
            <person name="Ishii S."/>
            <person name="Yamamoto J."/>
            <person name="Saito K."/>
            <person name="Kawai Y."/>
            <person name="Isono Y."/>
            <person name="Nakamura Y."/>
            <person name="Nagahari K."/>
            <person name="Murakami K."/>
            <person name="Yasuda T."/>
            <person name="Iwayanagi T."/>
            <person name="Wagatsuma M."/>
            <person name="Shiratori A."/>
            <person name="Sudo H."/>
            <person name="Hosoiri T."/>
            <person name="Kaku Y."/>
            <person name="Kodaira H."/>
            <person name="Kondo H."/>
            <person name="Sugawara M."/>
            <person name="Takahashi M."/>
            <person name="Kanda K."/>
            <person name="Yokoi T."/>
            <person name="Furuya T."/>
            <person name="Kikkawa E."/>
            <person name="Omura Y."/>
            <person name="Abe K."/>
            <person name="Kamihara K."/>
            <person name="Katsuta N."/>
            <person name="Sato K."/>
            <person name="Tanikawa M."/>
            <person name="Yamazaki M."/>
            <person name="Ninomiya K."/>
            <person name="Ishibashi T."/>
            <person name="Yamashita H."/>
            <person name="Murakawa K."/>
            <person name="Fujimori K."/>
            <person name="Tanai H."/>
            <person name="Kimata M."/>
            <person name="Watanabe M."/>
            <person name="Hiraoka S."/>
            <person name="Chiba Y."/>
            <person name="Ishida S."/>
            <person name="Ono Y."/>
            <person name="Takiguchi S."/>
            <person name="Watanabe S."/>
            <person name="Yosida M."/>
            <person name="Hotuta T."/>
            <person name="Kusano J."/>
            <person name="Kanehori K."/>
            <person name="Takahashi-Fujii A."/>
            <person name="Hara H."/>
            <person name="Tanase T.-O."/>
            <person name="Nomura Y."/>
            <person name="Togiya S."/>
            <person name="Komai F."/>
            <person name="Hara R."/>
            <person name="Takeuchi K."/>
            <person name="Arita M."/>
            <person name="Imose N."/>
            <person name="Musashino K."/>
            <person name="Yuuki H."/>
            <person name="Oshima A."/>
            <person name="Sasaki N."/>
            <person name="Aotsuka S."/>
            <person name="Yoshikawa Y."/>
            <person name="Matsunawa H."/>
            <person name="Ichihara T."/>
            <person name="Shiohata N."/>
            <person name="Sano S."/>
            <person name="Moriya S."/>
            <person name="Momiyama H."/>
            <person name="Satoh N."/>
            <person name="Takami S."/>
            <person name="Terashima Y."/>
            <person name="Suzuki O."/>
            <person name="Nakagawa S."/>
            <person name="Senoh A."/>
            <person name="Mizoguchi H."/>
            <person name="Goto Y."/>
            <person name="Shimizu F."/>
            <person name="Wakebe H."/>
            <person name="Hishigaki H."/>
            <person name="Watanabe T."/>
            <person name="Sugiyama A."/>
            <person name="Takemoto M."/>
            <person name="Kawakami B."/>
            <person name="Yamazaki M."/>
            <person name="Watanabe K."/>
            <person name="Kumagai A."/>
            <person name="Itakura S."/>
            <person name="Fukuzumi Y."/>
            <person name="Fujimori Y."/>
            <person name="Komiyama M."/>
            <person name="Tashiro H."/>
            <person name="Tanigami A."/>
            <person name="Fujiwara T."/>
            <person name="Ono T."/>
            <person name="Yamada K."/>
            <person name="Fujii Y."/>
            <person name="Ozaki K."/>
            <person name="Hirao M."/>
            <person name="Ohmori Y."/>
            <person name="Kawabata A."/>
            <person name="Hikiji T."/>
            <person name="Kobatake N."/>
            <person name="Inagaki H."/>
            <person name="Ikema Y."/>
            <person name="Okamoto S."/>
            <person name="Okitani R."/>
            <person name="Kawakami T."/>
            <person name="Noguchi S."/>
            <person name="Itoh T."/>
            <person name="Shigeta K."/>
            <person name="Senba T."/>
            <person name="Matsumura K."/>
            <person name="Nakajima Y."/>
            <person name="Mizuno T."/>
            <person name="Morinaga M."/>
            <person name="Sasaki M."/>
            <person name="Togashi T."/>
            <person name="Oyama M."/>
            <person name="Hata H."/>
            <person name="Watanabe M."/>
            <person name="Komatsu T."/>
            <person name="Mizushima-Sugano J."/>
            <person name="Satoh T."/>
            <person name="Shirai Y."/>
            <person name="Takahashi Y."/>
            <person name="Nakagawa K."/>
            <person name="Okumura K."/>
            <person name="Nagase T."/>
            <person name="Nomura N."/>
            <person name="Kikuchi H."/>
            <person name="Masuho Y."/>
            <person name="Yamashita R."/>
            <person name="Nakai K."/>
            <person name="Yada T."/>
            <person name="Nakamura Y."/>
            <person name="Ohara O."/>
            <person name="Isogai T."/>
            <person name="Sugano S."/>
        </authorList>
    </citation>
    <scope>NUCLEOTIDE SEQUENCE [LARGE SCALE MRNA] (ISOFORM 2)</scope>
</reference>
<reference key="5">
    <citation type="journal article" date="2004" name="Nature">
        <title>The sequence and analysis of duplication-rich human chromosome 16.</title>
        <authorList>
            <person name="Martin J."/>
            <person name="Han C."/>
            <person name="Gordon L.A."/>
            <person name="Terry A."/>
            <person name="Prabhakar S."/>
            <person name="She X."/>
            <person name="Xie G."/>
            <person name="Hellsten U."/>
            <person name="Chan Y.M."/>
            <person name="Altherr M."/>
            <person name="Couronne O."/>
            <person name="Aerts A."/>
            <person name="Bajorek E."/>
            <person name="Black S."/>
            <person name="Blumer H."/>
            <person name="Branscomb E."/>
            <person name="Brown N.C."/>
            <person name="Bruno W.J."/>
            <person name="Buckingham J.M."/>
            <person name="Callen D.F."/>
            <person name="Campbell C.S."/>
            <person name="Campbell M.L."/>
            <person name="Campbell E.W."/>
            <person name="Caoile C."/>
            <person name="Challacombe J.F."/>
            <person name="Chasteen L.A."/>
            <person name="Chertkov O."/>
            <person name="Chi H.C."/>
            <person name="Christensen M."/>
            <person name="Clark L.M."/>
            <person name="Cohn J.D."/>
            <person name="Denys M."/>
            <person name="Detter J.C."/>
            <person name="Dickson M."/>
            <person name="Dimitrijevic-Bussod M."/>
            <person name="Escobar J."/>
            <person name="Fawcett J.J."/>
            <person name="Flowers D."/>
            <person name="Fotopulos D."/>
            <person name="Glavina T."/>
            <person name="Gomez M."/>
            <person name="Gonzales E."/>
            <person name="Goodstein D."/>
            <person name="Goodwin L.A."/>
            <person name="Grady D.L."/>
            <person name="Grigoriev I."/>
            <person name="Groza M."/>
            <person name="Hammon N."/>
            <person name="Hawkins T."/>
            <person name="Haydu L."/>
            <person name="Hildebrand C.E."/>
            <person name="Huang W."/>
            <person name="Israni S."/>
            <person name="Jett J."/>
            <person name="Jewett P.B."/>
            <person name="Kadner K."/>
            <person name="Kimball H."/>
            <person name="Kobayashi A."/>
            <person name="Krawczyk M.-C."/>
            <person name="Leyba T."/>
            <person name="Longmire J.L."/>
            <person name="Lopez F."/>
            <person name="Lou Y."/>
            <person name="Lowry S."/>
            <person name="Ludeman T."/>
            <person name="Manohar C.F."/>
            <person name="Mark G.A."/>
            <person name="McMurray K.L."/>
            <person name="Meincke L.J."/>
            <person name="Morgan J."/>
            <person name="Moyzis R.K."/>
            <person name="Mundt M.O."/>
            <person name="Munk A.C."/>
            <person name="Nandkeshwar R.D."/>
            <person name="Pitluck S."/>
            <person name="Pollard M."/>
            <person name="Predki P."/>
            <person name="Parson-Quintana B."/>
            <person name="Ramirez L."/>
            <person name="Rash S."/>
            <person name="Retterer J."/>
            <person name="Ricke D.O."/>
            <person name="Robinson D.L."/>
            <person name="Rodriguez A."/>
            <person name="Salamov A."/>
            <person name="Saunders E.H."/>
            <person name="Scott D."/>
            <person name="Shough T."/>
            <person name="Stallings R.L."/>
            <person name="Stalvey M."/>
            <person name="Sutherland R.D."/>
            <person name="Tapia R."/>
            <person name="Tesmer J.G."/>
            <person name="Thayer N."/>
            <person name="Thompson L.S."/>
            <person name="Tice H."/>
            <person name="Torney D.C."/>
            <person name="Tran-Gyamfi M."/>
            <person name="Tsai M."/>
            <person name="Ulanovsky L.E."/>
            <person name="Ustaszewska A."/>
            <person name="Vo N."/>
            <person name="White P.S."/>
            <person name="Williams A.L."/>
            <person name="Wills P.L."/>
            <person name="Wu J.-R."/>
            <person name="Wu K."/>
            <person name="Yang J."/>
            <person name="DeJong P."/>
            <person name="Bruce D."/>
            <person name="Doggett N.A."/>
            <person name="Deaven L."/>
            <person name="Schmutz J."/>
            <person name="Grimwood J."/>
            <person name="Richardson P."/>
            <person name="Rokhsar D.S."/>
            <person name="Eichler E.E."/>
            <person name="Gilna P."/>
            <person name="Lucas S.M."/>
            <person name="Myers R.M."/>
            <person name="Rubin E.M."/>
            <person name="Pennacchio L.A."/>
        </authorList>
    </citation>
    <scope>NUCLEOTIDE SEQUENCE [LARGE SCALE GENOMIC DNA]</scope>
</reference>
<reference key="6">
    <citation type="submission" date="2005-09" db="EMBL/GenBank/DDBJ databases">
        <authorList>
            <person name="Mural R.J."/>
            <person name="Istrail S."/>
            <person name="Sutton G.G."/>
            <person name="Florea L."/>
            <person name="Halpern A.L."/>
            <person name="Mobarry C.M."/>
            <person name="Lippert R."/>
            <person name="Walenz B."/>
            <person name="Shatkay H."/>
            <person name="Dew I."/>
            <person name="Miller J.R."/>
            <person name="Flanigan M.J."/>
            <person name="Edwards N.J."/>
            <person name="Bolanos R."/>
            <person name="Fasulo D."/>
            <person name="Halldorsson B.V."/>
            <person name="Hannenhalli S."/>
            <person name="Turner R."/>
            <person name="Yooseph S."/>
            <person name="Lu F."/>
            <person name="Nusskern D.R."/>
            <person name="Shue B.C."/>
            <person name="Zheng X.H."/>
            <person name="Zhong F."/>
            <person name="Delcher A.L."/>
            <person name="Huson D.H."/>
            <person name="Kravitz S.A."/>
            <person name="Mouchard L."/>
            <person name="Reinert K."/>
            <person name="Remington K.A."/>
            <person name="Clark A.G."/>
            <person name="Waterman M.S."/>
            <person name="Eichler E.E."/>
            <person name="Adams M.D."/>
            <person name="Hunkapiller M.W."/>
            <person name="Myers E.W."/>
            <person name="Venter J.C."/>
        </authorList>
    </citation>
    <scope>NUCLEOTIDE SEQUENCE [LARGE SCALE GENOMIC DNA]</scope>
</reference>
<reference key="7">
    <citation type="journal article" date="2004" name="Genome Res.">
        <title>The status, quality, and expansion of the NIH full-length cDNA project: the Mammalian Gene Collection (MGC).</title>
        <authorList>
            <consortium name="The MGC Project Team"/>
        </authorList>
    </citation>
    <scope>NUCLEOTIDE SEQUENCE [LARGE SCALE MRNA] (ISOFORM 1)</scope>
    <source>
        <tissue>Choriocarcinoma</tissue>
        <tissue>Skin</tissue>
        <tissue>Testis</tissue>
    </source>
</reference>
<reference key="8">
    <citation type="submission" date="2005-04" db="EMBL/GenBank/DDBJ databases">
        <authorList>
            <person name="Suzuki Y."/>
            <person name="Sugano S."/>
            <person name="Totoki Y."/>
            <person name="Toyoda A."/>
            <person name="Takeda T."/>
            <person name="Sakaki Y."/>
            <person name="Tanaka A."/>
            <person name="Yokoyama S."/>
        </authorList>
    </citation>
    <scope>NUCLEOTIDE SEQUENCE [LARGE SCALE MRNA] OF 715-1125</scope>
    <source>
        <tissue>Thyroid</tissue>
    </source>
</reference>
<reference key="9">
    <citation type="journal article" date="2008" name="Mol. Cell">
        <title>Kinase-selective enrichment enables quantitative phosphoproteomics of the kinome across the cell cycle.</title>
        <authorList>
            <person name="Daub H."/>
            <person name="Olsen J.V."/>
            <person name="Bairlein M."/>
            <person name="Gnad F."/>
            <person name="Oppermann F.S."/>
            <person name="Korner R."/>
            <person name="Greff Z."/>
            <person name="Keri G."/>
            <person name="Stemmann O."/>
            <person name="Mann M."/>
        </authorList>
    </citation>
    <scope>IDENTIFICATION BY MASS SPECTROMETRY [LARGE SCALE ANALYSIS]</scope>
    <source>
        <tissue>Cervix carcinoma</tissue>
    </source>
</reference>
<reference key="10">
    <citation type="journal article" date="2008" name="Proc. Natl. Acad. Sci. U.S.A.">
        <title>A quantitative atlas of mitotic phosphorylation.</title>
        <authorList>
            <person name="Dephoure N."/>
            <person name="Zhou C."/>
            <person name="Villen J."/>
            <person name="Beausoleil S.A."/>
            <person name="Bakalarski C.E."/>
            <person name="Elledge S.J."/>
            <person name="Gygi S.P."/>
        </authorList>
    </citation>
    <scope>PHOSPHORYLATION [LARGE SCALE ANALYSIS] AT THR-204 AND SER-224</scope>
    <scope>IDENTIFICATION BY MASS SPECTROMETRY [LARGE SCALE ANALYSIS]</scope>
    <source>
        <tissue>Cervix carcinoma</tissue>
    </source>
</reference>
<reference key="11">
    <citation type="journal article" date="2009" name="Anal. Chem.">
        <title>Lys-N and trypsin cover complementary parts of the phosphoproteome in a refined SCX-based approach.</title>
        <authorList>
            <person name="Gauci S."/>
            <person name="Helbig A.O."/>
            <person name="Slijper M."/>
            <person name="Krijgsveld J."/>
            <person name="Heck A.J."/>
            <person name="Mohammed S."/>
        </authorList>
    </citation>
    <scope>IDENTIFICATION BY MASS SPECTROMETRY [LARGE SCALE ANALYSIS]</scope>
</reference>
<reference key="12">
    <citation type="journal article" date="2009" name="Sci. Signal.">
        <title>Quantitative phosphoproteomic analysis of T cell receptor signaling reveals system-wide modulation of protein-protein interactions.</title>
        <authorList>
            <person name="Mayya V."/>
            <person name="Lundgren D.H."/>
            <person name="Hwang S.-I."/>
            <person name="Rezaul K."/>
            <person name="Wu L."/>
            <person name="Eng J.K."/>
            <person name="Rodionov V."/>
            <person name="Han D.K."/>
        </authorList>
    </citation>
    <scope>PHOSPHORYLATION [LARGE SCALE ANALYSIS] AT THR-201; THR-204 AND SER-224</scope>
    <scope>IDENTIFICATION BY MASS SPECTROMETRY [LARGE SCALE ANALYSIS]</scope>
    <source>
        <tissue>Leukemic T-cell</tissue>
    </source>
</reference>
<reference key="13">
    <citation type="journal article" date="2011" name="BMC Syst. Biol.">
        <title>Initial characterization of the human central proteome.</title>
        <authorList>
            <person name="Burkard T.R."/>
            <person name="Planyavsky M."/>
            <person name="Kaupe I."/>
            <person name="Breitwieser F.P."/>
            <person name="Buerckstuemmer T."/>
            <person name="Bennett K.L."/>
            <person name="Superti-Furga G."/>
            <person name="Colinge J."/>
        </authorList>
    </citation>
    <scope>IDENTIFICATION BY MASS SPECTROMETRY [LARGE SCALE ANALYSIS]</scope>
</reference>
<reference key="14">
    <citation type="journal article" date="2011" name="Sci. Signal.">
        <title>System-wide temporal characterization of the proteome and phosphoproteome of human embryonic stem cell differentiation.</title>
        <authorList>
            <person name="Rigbolt K.T."/>
            <person name="Prokhorova T.A."/>
            <person name="Akimov V."/>
            <person name="Henningsen J."/>
            <person name="Johansen P.T."/>
            <person name="Kratchmarova I."/>
            <person name="Kassem M."/>
            <person name="Mann M."/>
            <person name="Olsen J.V."/>
            <person name="Blagoev B."/>
        </authorList>
    </citation>
    <scope>IDENTIFICATION BY MASS SPECTROMETRY [LARGE SCALE ANALYSIS]</scope>
</reference>
<reference key="15">
    <citation type="journal article" date="2012" name="Mol. Cell. Proteomics">
        <title>Comparative large-scale characterisation of plant vs. mammal proteins reveals similar and idiosyncratic N-alpha acetylation features.</title>
        <authorList>
            <person name="Bienvenut W.V."/>
            <person name="Sumpton D."/>
            <person name="Martinez A."/>
            <person name="Lilla S."/>
            <person name="Espagne C."/>
            <person name="Meinnel T."/>
            <person name="Giglione C."/>
        </authorList>
    </citation>
    <scope>ACETYLATION [LARGE SCALE ANALYSIS] AT ALA-2</scope>
    <scope>CLEAVAGE OF INITIATOR METHIONINE [LARGE SCALE ANALYSIS]</scope>
    <scope>IDENTIFICATION BY MASS SPECTROMETRY [LARGE SCALE ANALYSIS]</scope>
</reference>
<reference key="16">
    <citation type="journal article" date="2012" name="Proc. Natl. Acad. Sci. U.S.A.">
        <title>N-terminal acetylome analyses and functional insights of the N-terminal acetyltransferase NatB.</title>
        <authorList>
            <person name="Van Damme P."/>
            <person name="Lasa M."/>
            <person name="Polevoda B."/>
            <person name="Gazquez C."/>
            <person name="Elosegui-Artola A."/>
            <person name="Kim D.S."/>
            <person name="De Juan-Pardo E."/>
            <person name="Demeyer K."/>
            <person name="Hole K."/>
            <person name="Larrea E."/>
            <person name="Timmerman E."/>
            <person name="Prieto J."/>
            <person name="Arnesen T."/>
            <person name="Sherman F."/>
            <person name="Gevaert K."/>
            <person name="Aldabe R."/>
        </authorList>
    </citation>
    <scope>ACETYLATION [LARGE SCALE ANALYSIS] AT ALA-2</scope>
    <scope>CLEAVAGE OF INITIATOR METHIONINE [LARGE SCALE ANALYSIS]</scope>
    <scope>IDENTIFICATION BY MASS SPECTROMETRY [LARGE SCALE ANALYSIS]</scope>
</reference>
<reference key="17">
    <citation type="journal article" date="2013" name="J. Proteome Res.">
        <title>Toward a comprehensive characterization of a human cancer cell phosphoproteome.</title>
        <authorList>
            <person name="Zhou H."/>
            <person name="Di Palma S."/>
            <person name="Preisinger C."/>
            <person name="Peng M."/>
            <person name="Polat A.N."/>
            <person name="Heck A.J."/>
            <person name="Mohammed S."/>
        </authorList>
    </citation>
    <scope>PHOSPHORYLATION [LARGE SCALE ANALYSIS] AT THR-204 AND SER-208</scope>
    <scope>IDENTIFICATION BY MASS SPECTROMETRY [LARGE SCALE ANALYSIS]</scope>
    <source>
        <tissue>Erythroleukemia</tissue>
    </source>
</reference>
<organism>
    <name type="scientific">Homo sapiens</name>
    <name type="common">Human</name>
    <dbReference type="NCBI Taxonomy" id="9606"/>
    <lineage>
        <taxon>Eukaryota</taxon>
        <taxon>Metazoa</taxon>
        <taxon>Chordata</taxon>
        <taxon>Craniata</taxon>
        <taxon>Vertebrata</taxon>
        <taxon>Euteleostomi</taxon>
        <taxon>Mammalia</taxon>
        <taxon>Eutheria</taxon>
        <taxon>Euarchontoglires</taxon>
        <taxon>Primates</taxon>
        <taxon>Haplorrhini</taxon>
        <taxon>Catarrhini</taxon>
        <taxon>Hominidae</taxon>
        <taxon>Homo</taxon>
    </lineage>
</organism>
<comment type="function">
    <text evidence="3">Mediates the nuclear export of actin and profilin-actin complexes in somatic cells.</text>
</comment>
<comment type="subunit">
    <text evidence="3">Found in a complex with XPO6, Ran, ACTB and PFN1. Interacts with ACTB (PubMed:14592989). Interacts with ACTB in a RanGTP-dependent manner (PubMed:14592989).</text>
</comment>
<comment type="interaction">
    <interactant intactId="EBI-1022896">
        <id>Q96QU8</id>
    </interactant>
    <interactant intactId="EBI-347978">
        <id>P37198</id>
        <label>NUP62</label>
    </interactant>
    <organismsDiffer>false</organismsDiffer>
    <experiments>3</experiments>
</comment>
<comment type="interaction">
    <interactant intactId="EBI-10293124">
        <id>Q96QU8-2</id>
    </interactant>
    <interactant intactId="EBI-347978">
        <id>P37198</id>
        <label>NUP62</label>
    </interactant>
    <organismsDiffer>false</organismsDiffer>
    <experiments>3</experiments>
</comment>
<comment type="subcellular location">
    <subcellularLocation>
        <location evidence="3">Nucleus</location>
    </subcellularLocation>
    <subcellularLocation>
        <location evidence="3">Cytoplasm</location>
    </subcellularLocation>
    <text evidence="3">Shuttles between the nucleus and the cytoplasm.</text>
</comment>
<comment type="alternative products">
    <event type="alternative splicing"/>
    <isoform>
        <id>Q96QU8-1</id>
        <name>1</name>
        <sequence type="displayed"/>
    </isoform>
    <isoform>
        <id>Q96QU8-2</id>
        <name>2</name>
        <sequence type="described" ref="VSP_055756"/>
    </isoform>
</comment>
<comment type="similarity">
    <text evidence="5">Belongs to the exportin family.</text>
</comment>
<comment type="sequence caution" evidence="5">
    <conflict type="erroneous initiation">
        <sequence resource="EMBL-CDS" id="BAA20825"/>
    </conflict>
</comment>
<name>XPO6_HUMAN</name>
<protein>
    <recommendedName>
        <fullName>Exportin-6</fullName>
        <shortName>Exp6</shortName>
    </recommendedName>
    <alternativeName>
        <fullName>Ran-binding protein 20</fullName>
    </alternativeName>
</protein>
<keyword id="KW-0007">Acetylation</keyword>
<keyword id="KW-0025">Alternative splicing</keyword>
<keyword id="KW-0963">Cytoplasm</keyword>
<keyword id="KW-0539">Nucleus</keyword>
<keyword id="KW-0597">Phosphoprotein</keyword>
<keyword id="KW-0653">Protein transport</keyword>
<keyword id="KW-1267">Proteomics identification</keyword>
<keyword id="KW-1185">Reference proteome</keyword>
<keyword id="KW-0813">Transport</keyword>
<gene>
    <name type="primary">XPO6</name>
    <name type="synonym">KIAA0370</name>
    <name type="synonym">RANBP20</name>
</gene>
<dbReference type="EMBL" id="AY026388">
    <property type="protein sequence ID" value="AAK01471.1"/>
    <property type="molecule type" value="mRNA"/>
</dbReference>
<dbReference type="EMBL" id="AB002368">
    <property type="protein sequence ID" value="BAA20825.3"/>
    <property type="status" value="ALT_INIT"/>
    <property type="molecule type" value="mRNA"/>
</dbReference>
<dbReference type="EMBL" id="AK123846">
    <property type="status" value="NOT_ANNOTATED_CDS"/>
    <property type="molecule type" value="mRNA"/>
</dbReference>
<dbReference type="EMBL" id="AC136611">
    <property type="status" value="NOT_ANNOTATED_CDS"/>
    <property type="molecule type" value="Genomic_DNA"/>
</dbReference>
<dbReference type="EMBL" id="CH471145">
    <property type="protein sequence ID" value="EAW55736.1"/>
    <property type="molecule type" value="Genomic_DNA"/>
</dbReference>
<dbReference type="EMBL" id="CH471145">
    <property type="protein sequence ID" value="EAW55738.1"/>
    <property type="molecule type" value="Genomic_DNA"/>
</dbReference>
<dbReference type="EMBL" id="CH471145">
    <property type="protein sequence ID" value="EAW55739.1"/>
    <property type="molecule type" value="Genomic_DNA"/>
</dbReference>
<dbReference type="EMBL" id="BC004403">
    <property type="protein sequence ID" value="AAH04403.1"/>
    <property type="molecule type" value="mRNA"/>
</dbReference>
<dbReference type="EMBL" id="BC014071">
    <property type="protein sequence ID" value="AAH14071.2"/>
    <property type="molecule type" value="mRNA"/>
</dbReference>
<dbReference type="EMBL" id="BC078674">
    <property type="protein sequence ID" value="AAH78674.1"/>
    <property type="molecule type" value="mRNA"/>
</dbReference>
<dbReference type="EMBL" id="BC108286">
    <property type="protein sequence ID" value="AAI08287.1"/>
    <property type="molecule type" value="mRNA"/>
</dbReference>
<dbReference type="EMBL" id="BC130304">
    <property type="protein sequence ID" value="AAI30305.1"/>
    <property type="molecule type" value="mRNA"/>
</dbReference>
<dbReference type="EMBL" id="AK223043">
    <property type="protein sequence ID" value="BAD96763.1"/>
    <property type="molecule type" value="mRNA"/>
</dbReference>
<dbReference type="CCDS" id="CCDS42135.1">
    <molecule id="Q96QU8-1"/>
</dbReference>
<dbReference type="CCDS" id="CCDS59266.1">
    <molecule id="Q96QU8-2"/>
</dbReference>
<dbReference type="RefSeq" id="NP_001257869.1">
    <molecule id="Q96QU8-2"/>
    <property type="nucleotide sequence ID" value="NM_001270940.2"/>
</dbReference>
<dbReference type="RefSeq" id="NP_055986.1">
    <molecule id="Q96QU8-1"/>
    <property type="nucleotide sequence ID" value="NM_015171.4"/>
</dbReference>
<dbReference type="SMR" id="Q96QU8"/>
<dbReference type="BioGRID" id="116821">
    <property type="interactions" value="96"/>
</dbReference>
<dbReference type="CORUM" id="Q96QU8"/>
<dbReference type="FunCoup" id="Q96QU8">
    <property type="interactions" value="4663"/>
</dbReference>
<dbReference type="IntAct" id="Q96QU8">
    <property type="interactions" value="60"/>
</dbReference>
<dbReference type="MINT" id="Q96QU8"/>
<dbReference type="STRING" id="9606.ENSP00000302790"/>
<dbReference type="CarbonylDB" id="Q96QU8"/>
<dbReference type="GlyGen" id="Q96QU8">
    <property type="glycosylation" value="3 sites, 1 N-linked glycan (1 site), 1 O-linked glycan (1 site)"/>
</dbReference>
<dbReference type="iPTMnet" id="Q96QU8"/>
<dbReference type="PhosphoSitePlus" id="Q96QU8"/>
<dbReference type="BioMuta" id="XPO6"/>
<dbReference type="DMDM" id="74724278"/>
<dbReference type="jPOST" id="Q96QU8"/>
<dbReference type="MassIVE" id="Q96QU8"/>
<dbReference type="PaxDb" id="9606-ENSP00000302790"/>
<dbReference type="PeptideAtlas" id="Q96QU8"/>
<dbReference type="ProteomicsDB" id="12772"/>
<dbReference type="ProteomicsDB" id="77908">
    <molecule id="Q96QU8-1"/>
</dbReference>
<dbReference type="Pumba" id="Q96QU8"/>
<dbReference type="Antibodypedia" id="26312">
    <property type="antibodies" value="65 antibodies from 19 providers"/>
</dbReference>
<dbReference type="DNASU" id="23214"/>
<dbReference type="Ensembl" id="ENST00000304658.10">
    <molecule id="Q96QU8-1"/>
    <property type="protein sequence ID" value="ENSP00000302790.4"/>
    <property type="gene ID" value="ENSG00000169180.12"/>
</dbReference>
<dbReference type="Ensembl" id="ENST00000565698.5">
    <molecule id="Q96QU8-2"/>
    <property type="protein sequence ID" value="ENSP00000457341.1"/>
    <property type="gene ID" value="ENSG00000169180.12"/>
</dbReference>
<dbReference type="GeneID" id="23214"/>
<dbReference type="KEGG" id="hsa:23214"/>
<dbReference type="MANE-Select" id="ENST00000304658.10">
    <property type="protein sequence ID" value="ENSP00000302790.4"/>
    <property type="RefSeq nucleotide sequence ID" value="NM_015171.4"/>
    <property type="RefSeq protein sequence ID" value="NP_055986.1"/>
</dbReference>
<dbReference type="UCSC" id="uc002dpa.4">
    <molecule id="Q96QU8-1"/>
    <property type="organism name" value="human"/>
</dbReference>
<dbReference type="AGR" id="HGNC:19733"/>
<dbReference type="CTD" id="23214"/>
<dbReference type="DisGeNET" id="23214"/>
<dbReference type="GeneCards" id="XPO6"/>
<dbReference type="HGNC" id="HGNC:19733">
    <property type="gene designation" value="XPO6"/>
</dbReference>
<dbReference type="HPA" id="ENSG00000169180">
    <property type="expression patterns" value="Low tissue specificity"/>
</dbReference>
<dbReference type="MIM" id="608411">
    <property type="type" value="gene"/>
</dbReference>
<dbReference type="neXtProt" id="NX_Q96QU8"/>
<dbReference type="OpenTargets" id="ENSG00000169180"/>
<dbReference type="PharmGKB" id="PA134989996"/>
<dbReference type="VEuPathDB" id="HostDB:ENSG00000169180"/>
<dbReference type="eggNOG" id="KOG2020">
    <property type="taxonomic scope" value="Eukaryota"/>
</dbReference>
<dbReference type="GeneTree" id="ENSGT00390000002810"/>
<dbReference type="HOGENOM" id="CLU_004473_0_0_1"/>
<dbReference type="InParanoid" id="Q96QU8"/>
<dbReference type="OMA" id="KITRFNH"/>
<dbReference type="OrthoDB" id="10261013at2759"/>
<dbReference type="PAN-GO" id="Q96QU8">
    <property type="GO annotations" value="1 GO annotation based on evolutionary models"/>
</dbReference>
<dbReference type="PhylomeDB" id="Q96QU8"/>
<dbReference type="TreeFam" id="TF323443"/>
<dbReference type="PathwayCommons" id="Q96QU8"/>
<dbReference type="SignaLink" id="Q96QU8"/>
<dbReference type="BioGRID-ORCS" id="23214">
    <property type="hits" value="27 hits in 1161 CRISPR screens"/>
</dbReference>
<dbReference type="ChiTaRS" id="XPO6">
    <property type="organism name" value="human"/>
</dbReference>
<dbReference type="GeneWiki" id="XPO6"/>
<dbReference type="GenomeRNAi" id="23214"/>
<dbReference type="Pharos" id="Q96QU8">
    <property type="development level" value="Tbio"/>
</dbReference>
<dbReference type="PRO" id="PR:Q96QU8"/>
<dbReference type="Proteomes" id="UP000005640">
    <property type="component" value="Chromosome 16"/>
</dbReference>
<dbReference type="RNAct" id="Q96QU8">
    <property type="molecule type" value="protein"/>
</dbReference>
<dbReference type="Bgee" id="ENSG00000169180">
    <property type="expression patterns" value="Expressed in blood and 198 other cell types or tissues"/>
</dbReference>
<dbReference type="ExpressionAtlas" id="Q96QU8">
    <property type="expression patterns" value="baseline and differential"/>
</dbReference>
<dbReference type="GO" id="GO:0005737">
    <property type="term" value="C:cytoplasm"/>
    <property type="evidence" value="ECO:0000305"/>
    <property type="project" value="UniProtKB"/>
</dbReference>
<dbReference type="GO" id="GO:0005829">
    <property type="term" value="C:cytosol"/>
    <property type="evidence" value="ECO:0000314"/>
    <property type="project" value="HPA"/>
</dbReference>
<dbReference type="GO" id="GO:0005730">
    <property type="term" value="C:nucleolus"/>
    <property type="evidence" value="ECO:0000314"/>
    <property type="project" value="HPA"/>
</dbReference>
<dbReference type="GO" id="GO:0005654">
    <property type="term" value="C:nucleoplasm"/>
    <property type="evidence" value="ECO:0000314"/>
    <property type="project" value="HPA"/>
</dbReference>
<dbReference type="GO" id="GO:0005634">
    <property type="term" value="C:nucleus"/>
    <property type="evidence" value="ECO:0000305"/>
    <property type="project" value="UniProtKB"/>
</dbReference>
<dbReference type="GO" id="GO:0005886">
    <property type="term" value="C:plasma membrane"/>
    <property type="evidence" value="ECO:0000314"/>
    <property type="project" value="HPA"/>
</dbReference>
<dbReference type="GO" id="GO:0032991">
    <property type="term" value="C:protein-containing complex"/>
    <property type="evidence" value="ECO:0000314"/>
    <property type="project" value="MGI"/>
</dbReference>
<dbReference type="GO" id="GO:0005049">
    <property type="term" value="F:nuclear export signal receptor activity"/>
    <property type="evidence" value="ECO:0000314"/>
    <property type="project" value="UniProtKB"/>
</dbReference>
<dbReference type="GO" id="GO:0031267">
    <property type="term" value="F:small GTPase binding"/>
    <property type="evidence" value="ECO:0007669"/>
    <property type="project" value="InterPro"/>
</dbReference>
<dbReference type="GO" id="GO:0006611">
    <property type="term" value="P:protein export from nucleus"/>
    <property type="evidence" value="ECO:0000314"/>
    <property type="project" value="UniProtKB"/>
</dbReference>
<dbReference type="FunFam" id="1.25.10.10:FF:000147">
    <property type="entry name" value="exportin-6 isoform X2"/>
    <property type="match status" value="1"/>
</dbReference>
<dbReference type="Gene3D" id="1.25.10.10">
    <property type="entry name" value="Leucine-rich Repeat Variant"/>
    <property type="match status" value="1"/>
</dbReference>
<dbReference type="InterPro" id="IPR011989">
    <property type="entry name" value="ARM-like"/>
</dbReference>
<dbReference type="InterPro" id="IPR016024">
    <property type="entry name" value="ARM-type_fold"/>
</dbReference>
<dbReference type="InterPro" id="IPR013598">
    <property type="entry name" value="Exportin-1/Importin-b-like"/>
</dbReference>
<dbReference type="InterPro" id="IPR001494">
    <property type="entry name" value="Importin-beta_N"/>
</dbReference>
<dbReference type="InterPro" id="IPR040016">
    <property type="entry name" value="XPO6"/>
</dbReference>
<dbReference type="PANTHER" id="PTHR21452">
    <property type="entry name" value="EXPORTIN-6"/>
    <property type="match status" value="1"/>
</dbReference>
<dbReference type="PANTHER" id="PTHR21452:SF4">
    <property type="entry name" value="EXPORTIN-6"/>
    <property type="match status" value="1"/>
</dbReference>
<dbReference type="Pfam" id="PF03810">
    <property type="entry name" value="IBN_N"/>
    <property type="match status" value="1"/>
</dbReference>
<dbReference type="Pfam" id="PF08389">
    <property type="entry name" value="Xpo1"/>
    <property type="match status" value="1"/>
</dbReference>
<dbReference type="SMART" id="SM00913">
    <property type="entry name" value="IBN_N"/>
    <property type="match status" value="1"/>
</dbReference>
<dbReference type="SUPFAM" id="SSF48371">
    <property type="entry name" value="ARM repeat"/>
    <property type="match status" value="1"/>
</dbReference>
<dbReference type="PROSITE" id="PS50166">
    <property type="entry name" value="IMPORTIN_B_NT"/>
    <property type="match status" value="1"/>
</dbReference>
<accession>Q96QU8</accession>
<accession>A1L3W4</accession>
<accession>D3DWF9</accession>
<accession>Q2YDX3</accession>
<accession>Q53G88</accession>
<accession>Q68G50</accession>
<accession>Q76N88</accession>
<accession>Q96CP8</accession>
<accession>Q9BT21</accession>
<proteinExistence type="evidence at protein level"/>
<feature type="initiator methionine" description="Removed" evidence="8 9">
    <location>
        <position position="1"/>
    </location>
</feature>
<feature type="chain" id="PRO_0000235301" description="Exportin-6">
    <location>
        <begin position="2"/>
        <end position="1125"/>
    </location>
</feature>
<feature type="domain" description="Importin N-terminal" evidence="2">
    <location>
        <begin position="31"/>
        <end position="97"/>
    </location>
</feature>
<feature type="modified residue" description="N-acetylalanine" evidence="8 9">
    <location>
        <position position="2"/>
    </location>
</feature>
<feature type="modified residue" description="Phosphoserine" evidence="1">
    <location>
        <position position="199"/>
    </location>
</feature>
<feature type="modified residue" description="Phosphothreonine" evidence="7">
    <location>
        <position position="201"/>
    </location>
</feature>
<feature type="modified residue" description="Phosphothreonine" evidence="6 7 10">
    <location>
        <position position="204"/>
    </location>
</feature>
<feature type="modified residue" description="Phosphoserine" evidence="10">
    <location>
        <position position="208"/>
    </location>
</feature>
<feature type="modified residue" description="Phosphoserine" evidence="6 7">
    <location>
        <position position="224"/>
    </location>
</feature>
<feature type="splice variant" id="VSP_055756" description="In isoform 2." evidence="4">
    <location>
        <begin position="1"/>
        <end position="14"/>
    </location>
</feature>
<feature type="sequence variant" id="VAR_048961" description="In dbSNP:rs14672.">
    <original>V</original>
    <variation>L</variation>
    <location>
        <position position="1029"/>
    </location>
</feature>
<feature type="sequence conflict" description="In Ref. 7; AAI08287." evidence="5" ref="7">
    <original>FV</original>
    <variation>L</variation>
    <location>
        <begin position="378"/>
        <end position="379"/>
    </location>
</feature>
<feature type="sequence conflict" description="In Ref. 7; AAH78674." evidence="5" ref="7">
    <original>Y</original>
    <variation>H</variation>
    <location>
        <position position="811"/>
    </location>
</feature>
<feature type="sequence conflict" description="In Ref. 8; BAD96763." evidence="5" ref="8">
    <original>K</original>
    <variation>R</variation>
    <location>
        <position position="891"/>
    </location>
</feature>
<sequence>MASEEASLRALESLMTEFFHDCTTNERKREIEELLNNFAQQIGAWRFCLYFLSSTRNDYVMMYSLTVFENLINKMWLGVPSQDKMEIRSCLPKLLLAHHKTLPYFIRNKLCKVIVDIGRQDWPMFYHDFFTNILQLIQSPVTTPLGLIMLKTTSEELACPREDLSVARKEELRKLLLDQVQTVLGLLTGILETVWDKHSVTAATPPPSPTSGESGDLLSNLLQSPSSAKLLNQPIPILDVESEYICSLALECLAHLFSWIPLSASITPSLLTTIFHFARFGCDIRARKMASVNGSSQNCVSGQERGRLGVLAMSCINELMSKNCVPMEFEEYLLRMFQQTFYLLQKITKDNNAHTVKSRLEELDESYIEKFTDFLRLFVSVHLRRIESYSQFPVVEFLTLLFKYTFHQPTHEGYFSCLDIWTLFLDYLTSKIKSRLGDKEAVLNRYEDALVLLLTEVLNRIQFRYNQAQLEELDDETLDDDQQTEWQRYLRQSLEVVAKVMELLPTHAFSTLFPVLQDNLEVYLGLQQFIVTSGSGHRLNITAENDCRRLHCSLRDLSSLLQAVGRLAEYFIGDVFAARFNDALTVVERLVKVTLYGSQIKLYNIETAVPSVLKPDLIDVHAQSLAALQAYSHWLAQYCSEVHRQNTQQFVTLISTTMDAITPLISTKVQDKLLLSACHLLVSLATTVRPVFLISIPAVQKVFNRITDASALRLVDKAQVLVCRALSNILLLPWPNLPENEQQWPVRSINHASLISALSRDYRNLKPSAVAPQRKMPLDDTKLIIHQTLSVLEDIVENISGESTKSRQICYQSLQESVQVSLALFPAFIHQSDVTDEMLSFFLTLFRGLRVQMGVPFTEQIIQTFLNMFTREQLAESILHEGSTGCRVVEKFLKILQVVVQEPGQVFKPFLPSIIALCMEQVYPIIAERPSPDVKAELFELLFRTLHHNWRYFFKSTVLASVQRGIAEEQMENEPQFSAIMQAFGQSFLQPDIHLFKQNLFYLETLNTKQKLYHKKIFRTAMLFQFVNVLLQVLVHKSHDLLQEEIGIAIYNMASVDFDGFFAAFLPEFLTSCDGVDANQKSVLGRNFKMDRDLPSFTQNVHRLVNDLRYYRLCNDSLPPGTVKL</sequence>